<keyword id="KW-0521">NADP</keyword>
<keyword id="KW-0560">Oxidoreductase</keyword>
<sequence>MFNDIPVFDYEDIQLIPNKCIITSRSQADTSVTLGKYQFKLPVIPANMQTIIDETIAEQLAKEGYFYIMHRFDEDSRKPFIKRMHEQGLIASISVGVKAYEYEFVTSLKEDTPEFITIDIAHGHANSVIDMIKHIKTELPETFVIAGNVGTPEAVRELENAGADATKVGIGPGKVCITKVKTGFGTGGWQLAALRWCAKAARKPIIADGGIRTHGDIAKSIRFGASMVMIGSLFAGHIESPGKTVEVNGETFKEYYGSASAYQKGEHKNVEGKKILLPTKGHLSDTLTEMQQDLQSSISYAGGKDLDSLRHVDYVIVKNSIWNGDSI</sequence>
<protein>
    <recommendedName>
        <fullName evidence="1">GMP reductase</fullName>
        <ecNumber evidence="1">1.7.1.7</ecNumber>
    </recommendedName>
    <alternativeName>
        <fullName evidence="1">Guanosine 5'-monophosphate oxidoreductase</fullName>
        <shortName evidence="1">Guanosine monophosphate reductase</shortName>
    </alternativeName>
</protein>
<accession>Q5XC75</accession>
<gene>
    <name evidence="1" type="primary">guaC</name>
    <name type="ordered locus">M6_Spy0853</name>
</gene>
<reference key="1">
    <citation type="journal article" date="2004" name="J. Infect. Dis.">
        <title>Progress toward characterization of the group A Streptococcus metagenome: complete genome sequence of a macrolide-resistant serotype M6 strain.</title>
        <authorList>
            <person name="Banks D.J."/>
            <person name="Porcella S.F."/>
            <person name="Barbian K.D."/>
            <person name="Beres S.B."/>
            <person name="Philips L.E."/>
            <person name="Voyich J.M."/>
            <person name="DeLeo F.R."/>
            <person name="Martin J.M."/>
            <person name="Somerville G.A."/>
            <person name="Musser J.M."/>
        </authorList>
    </citation>
    <scope>NUCLEOTIDE SEQUENCE [LARGE SCALE GENOMIC DNA]</scope>
    <source>
        <strain>ATCC BAA-946 / MGAS10394</strain>
    </source>
</reference>
<organism>
    <name type="scientific">Streptococcus pyogenes serotype M6 (strain ATCC BAA-946 / MGAS10394)</name>
    <dbReference type="NCBI Taxonomy" id="286636"/>
    <lineage>
        <taxon>Bacteria</taxon>
        <taxon>Bacillati</taxon>
        <taxon>Bacillota</taxon>
        <taxon>Bacilli</taxon>
        <taxon>Lactobacillales</taxon>
        <taxon>Streptococcaceae</taxon>
        <taxon>Streptococcus</taxon>
    </lineage>
</organism>
<feature type="chain" id="PRO_0000093781" description="GMP reductase">
    <location>
        <begin position="1"/>
        <end position="327"/>
    </location>
</feature>
<feature type="active site" description="Thioimidate intermediate" evidence="1">
    <location>
        <position position="176"/>
    </location>
</feature>
<feature type="binding site" evidence="1">
    <location>
        <begin position="205"/>
        <end position="228"/>
    </location>
    <ligand>
        <name>NADP(+)</name>
        <dbReference type="ChEBI" id="CHEBI:58349"/>
    </ligand>
</feature>
<name>GUAC_STRP6</name>
<comment type="function">
    <text evidence="1">Catalyzes the irreversible NADPH-dependent deamination of GMP to IMP. It functions in the conversion of nucleobase, nucleoside and nucleotide derivatives of G to A nucleotides, and in maintaining the intracellular balance of A and G nucleotides.</text>
</comment>
<comment type="catalytic activity">
    <reaction evidence="1">
        <text>IMP + NH4(+) + NADP(+) = GMP + NADPH + 2 H(+)</text>
        <dbReference type="Rhea" id="RHEA:17185"/>
        <dbReference type="ChEBI" id="CHEBI:15378"/>
        <dbReference type="ChEBI" id="CHEBI:28938"/>
        <dbReference type="ChEBI" id="CHEBI:57783"/>
        <dbReference type="ChEBI" id="CHEBI:58053"/>
        <dbReference type="ChEBI" id="CHEBI:58115"/>
        <dbReference type="ChEBI" id="CHEBI:58349"/>
        <dbReference type="EC" id="1.7.1.7"/>
    </reaction>
</comment>
<comment type="similarity">
    <text evidence="1">Belongs to the IMPDH/GMPR family. GuaC type 2 subfamily.</text>
</comment>
<comment type="sequence caution" evidence="2">
    <conflict type="erroneous initiation">
        <sequence resource="EMBL-CDS" id="AAT86988"/>
    </conflict>
</comment>
<evidence type="ECO:0000255" key="1">
    <source>
        <dbReference type="HAMAP-Rule" id="MF_01511"/>
    </source>
</evidence>
<evidence type="ECO:0000305" key="2"/>
<dbReference type="EC" id="1.7.1.7" evidence="1"/>
<dbReference type="EMBL" id="CP000003">
    <property type="protein sequence ID" value="AAT86988.1"/>
    <property type="status" value="ALT_INIT"/>
    <property type="molecule type" value="Genomic_DNA"/>
</dbReference>
<dbReference type="RefSeq" id="WP_002989808.1">
    <property type="nucleotide sequence ID" value="NC_006086.1"/>
</dbReference>
<dbReference type="SMR" id="Q5XC75"/>
<dbReference type="KEGG" id="spa:M6_Spy0853"/>
<dbReference type="HOGENOM" id="CLU_022552_5_0_9"/>
<dbReference type="Proteomes" id="UP000001167">
    <property type="component" value="Chromosome"/>
</dbReference>
<dbReference type="GO" id="GO:0005829">
    <property type="term" value="C:cytosol"/>
    <property type="evidence" value="ECO:0007669"/>
    <property type="project" value="TreeGrafter"/>
</dbReference>
<dbReference type="GO" id="GO:1902560">
    <property type="term" value="C:GMP reductase complex"/>
    <property type="evidence" value="ECO:0007669"/>
    <property type="project" value="InterPro"/>
</dbReference>
<dbReference type="GO" id="GO:0003920">
    <property type="term" value="F:GMP reductase activity"/>
    <property type="evidence" value="ECO:0007669"/>
    <property type="project" value="UniProtKB-UniRule"/>
</dbReference>
<dbReference type="GO" id="GO:0006163">
    <property type="term" value="P:purine nucleotide metabolic process"/>
    <property type="evidence" value="ECO:0007669"/>
    <property type="project" value="UniProtKB-UniRule"/>
</dbReference>
<dbReference type="CDD" id="cd00381">
    <property type="entry name" value="IMPDH"/>
    <property type="match status" value="1"/>
</dbReference>
<dbReference type="FunFam" id="3.20.20.70:FF:000424">
    <property type="entry name" value="Inosine-5'-monophosphate dehydrogenase 2"/>
    <property type="match status" value="1"/>
</dbReference>
<dbReference type="Gene3D" id="3.20.20.70">
    <property type="entry name" value="Aldolase class I"/>
    <property type="match status" value="1"/>
</dbReference>
<dbReference type="HAMAP" id="MF_01511">
    <property type="entry name" value="GMP_reduct_type2"/>
    <property type="match status" value="1"/>
</dbReference>
<dbReference type="InterPro" id="IPR013785">
    <property type="entry name" value="Aldolase_TIM"/>
</dbReference>
<dbReference type="InterPro" id="IPR050139">
    <property type="entry name" value="GMP_reductase"/>
</dbReference>
<dbReference type="InterPro" id="IPR005994">
    <property type="entry name" value="GuaC_type_2"/>
</dbReference>
<dbReference type="InterPro" id="IPR015875">
    <property type="entry name" value="IMP_DH/GMP_Rdtase_CS"/>
</dbReference>
<dbReference type="InterPro" id="IPR001093">
    <property type="entry name" value="IMP_DH_GMPRt"/>
</dbReference>
<dbReference type="NCBIfam" id="TIGR01306">
    <property type="entry name" value="GMP_reduct_2"/>
    <property type="match status" value="1"/>
</dbReference>
<dbReference type="NCBIfam" id="NF003966">
    <property type="entry name" value="PRK05458.1"/>
    <property type="match status" value="1"/>
</dbReference>
<dbReference type="PANTHER" id="PTHR43170">
    <property type="entry name" value="GMP REDUCTASE"/>
    <property type="match status" value="1"/>
</dbReference>
<dbReference type="PANTHER" id="PTHR43170:SF5">
    <property type="entry name" value="GMP REDUCTASE"/>
    <property type="match status" value="1"/>
</dbReference>
<dbReference type="Pfam" id="PF00478">
    <property type="entry name" value="IMPDH"/>
    <property type="match status" value="1"/>
</dbReference>
<dbReference type="PIRSF" id="PIRSF036500">
    <property type="entry name" value="GMP_red_Firmic"/>
    <property type="match status" value="1"/>
</dbReference>
<dbReference type="SMART" id="SM01240">
    <property type="entry name" value="IMPDH"/>
    <property type="match status" value="1"/>
</dbReference>
<dbReference type="SUPFAM" id="SSF51412">
    <property type="entry name" value="Inosine monophosphate dehydrogenase (IMPDH)"/>
    <property type="match status" value="1"/>
</dbReference>
<dbReference type="PROSITE" id="PS00487">
    <property type="entry name" value="IMP_DH_GMP_RED"/>
    <property type="match status" value="1"/>
</dbReference>
<proteinExistence type="inferred from homology"/>